<dbReference type="EC" id="1.2.1.41" evidence="1"/>
<dbReference type="EMBL" id="CP000511">
    <property type="protein sequence ID" value="ABM14711.1"/>
    <property type="molecule type" value="Genomic_DNA"/>
</dbReference>
<dbReference type="RefSeq" id="WP_011781091.1">
    <property type="nucleotide sequence ID" value="NZ_JACKSD010000018.1"/>
</dbReference>
<dbReference type="SMR" id="A1TC11"/>
<dbReference type="STRING" id="350058.Mvan_3934"/>
<dbReference type="KEGG" id="mva:Mvan_3934"/>
<dbReference type="eggNOG" id="COG0014">
    <property type="taxonomic scope" value="Bacteria"/>
</dbReference>
<dbReference type="HOGENOM" id="CLU_030231_0_0_11"/>
<dbReference type="UniPathway" id="UPA00098">
    <property type="reaction ID" value="UER00360"/>
</dbReference>
<dbReference type="Proteomes" id="UP000009159">
    <property type="component" value="Chromosome"/>
</dbReference>
<dbReference type="GO" id="GO:0005737">
    <property type="term" value="C:cytoplasm"/>
    <property type="evidence" value="ECO:0007669"/>
    <property type="project" value="UniProtKB-SubCell"/>
</dbReference>
<dbReference type="GO" id="GO:0004350">
    <property type="term" value="F:glutamate-5-semialdehyde dehydrogenase activity"/>
    <property type="evidence" value="ECO:0007669"/>
    <property type="project" value="UniProtKB-UniRule"/>
</dbReference>
<dbReference type="GO" id="GO:0050661">
    <property type="term" value="F:NADP binding"/>
    <property type="evidence" value="ECO:0007669"/>
    <property type="project" value="InterPro"/>
</dbReference>
<dbReference type="GO" id="GO:0055129">
    <property type="term" value="P:L-proline biosynthetic process"/>
    <property type="evidence" value="ECO:0007669"/>
    <property type="project" value="UniProtKB-UniRule"/>
</dbReference>
<dbReference type="CDD" id="cd07079">
    <property type="entry name" value="ALDH_F18-19_ProA-GPR"/>
    <property type="match status" value="1"/>
</dbReference>
<dbReference type="Gene3D" id="3.40.605.10">
    <property type="entry name" value="Aldehyde Dehydrogenase, Chain A, domain 1"/>
    <property type="match status" value="1"/>
</dbReference>
<dbReference type="Gene3D" id="3.40.309.10">
    <property type="entry name" value="Aldehyde Dehydrogenase, Chain A, domain 2"/>
    <property type="match status" value="1"/>
</dbReference>
<dbReference type="HAMAP" id="MF_00412">
    <property type="entry name" value="ProA"/>
    <property type="match status" value="1"/>
</dbReference>
<dbReference type="InterPro" id="IPR016161">
    <property type="entry name" value="Ald_DH/histidinol_DH"/>
</dbReference>
<dbReference type="InterPro" id="IPR016163">
    <property type="entry name" value="Ald_DH_C"/>
</dbReference>
<dbReference type="InterPro" id="IPR016162">
    <property type="entry name" value="Ald_DH_N"/>
</dbReference>
<dbReference type="InterPro" id="IPR015590">
    <property type="entry name" value="Aldehyde_DH_dom"/>
</dbReference>
<dbReference type="InterPro" id="IPR020593">
    <property type="entry name" value="G-glutamylP_reductase_CS"/>
</dbReference>
<dbReference type="InterPro" id="IPR012134">
    <property type="entry name" value="Glu-5-SA_DH"/>
</dbReference>
<dbReference type="InterPro" id="IPR000965">
    <property type="entry name" value="GPR_dom"/>
</dbReference>
<dbReference type="NCBIfam" id="NF001221">
    <property type="entry name" value="PRK00197.1"/>
    <property type="match status" value="1"/>
</dbReference>
<dbReference type="NCBIfam" id="TIGR00407">
    <property type="entry name" value="proA"/>
    <property type="match status" value="1"/>
</dbReference>
<dbReference type="PANTHER" id="PTHR11063:SF8">
    <property type="entry name" value="DELTA-1-PYRROLINE-5-CARBOXYLATE SYNTHASE"/>
    <property type="match status" value="1"/>
</dbReference>
<dbReference type="PANTHER" id="PTHR11063">
    <property type="entry name" value="GLUTAMATE SEMIALDEHYDE DEHYDROGENASE"/>
    <property type="match status" value="1"/>
</dbReference>
<dbReference type="Pfam" id="PF00171">
    <property type="entry name" value="Aldedh"/>
    <property type="match status" value="1"/>
</dbReference>
<dbReference type="PIRSF" id="PIRSF000151">
    <property type="entry name" value="GPR"/>
    <property type="match status" value="1"/>
</dbReference>
<dbReference type="SUPFAM" id="SSF53720">
    <property type="entry name" value="ALDH-like"/>
    <property type="match status" value="1"/>
</dbReference>
<dbReference type="PROSITE" id="PS01223">
    <property type="entry name" value="PROA"/>
    <property type="match status" value="1"/>
</dbReference>
<protein>
    <recommendedName>
        <fullName evidence="1">Gamma-glutamyl phosphate reductase</fullName>
        <shortName evidence="1">GPR</shortName>
        <ecNumber evidence="1">1.2.1.41</ecNumber>
    </recommendedName>
    <alternativeName>
        <fullName evidence="1">Glutamate-5-semialdehyde dehydrogenase</fullName>
    </alternativeName>
    <alternativeName>
        <fullName evidence="1">Glutamyl-gamma-semialdehyde dehydrogenase</fullName>
        <shortName evidence="1">GSA dehydrogenase</shortName>
    </alternativeName>
</protein>
<feature type="chain" id="PRO_1000049969" description="Gamma-glutamyl phosphate reductase">
    <location>
        <begin position="1"/>
        <end position="415"/>
    </location>
</feature>
<gene>
    <name evidence="1" type="primary">proA</name>
    <name type="ordered locus">Mvan_3934</name>
</gene>
<reference key="1">
    <citation type="submission" date="2006-12" db="EMBL/GenBank/DDBJ databases">
        <title>Complete sequence of Mycobacterium vanbaalenii PYR-1.</title>
        <authorList>
            <consortium name="US DOE Joint Genome Institute"/>
            <person name="Copeland A."/>
            <person name="Lucas S."/>
            <person name="Lapidus A."/>
            <person name="Barry K."/>
            <person name="Detter J.C."/>
            <person name="Glavina del Rio T."/>
            <person name="Hammon N."/>
            <person name="Israni S."/>
            <person name="Dalin E."/>
            <person name="Tice H."/>
            <person name="Pitluck S."/>
            <person name="Singan V."/>
            <person name="Schmutz J."/>
            <person name="Larimer F."/>
            <person name="Land M."/>
            <person name="Hauser L."/>
            <person name="Kyrpides N."/>
            <person name="Anderson I.J."/>
            <person name="Miller C."/>
            <person name="Richardson P."/>
        </authorList>
    </citation>
    <scope>NUCLEOTIDE SEQUENCE [LARGE SCALE GENOMIC DNA]</scope>
    <source>
        <strain>DSM 7251 / JCM 13017 / BCRC 16820 / KCTC 9966 / NRRL B-24157 / PYR-1</strain>
    </source>
</reference>
<accession>A1TC11</accession>
<organism>
    <name type="scientific">Mycolicibacterium vanbaalenii (strain DSM 7251 / JCM 13017 / BCRC 16820 / KCTC 9966 / NRRL B-24157 / PYR-1)</name>
    <name type="common">Mycobacterium vanbaalenii</name>
    <dbReference type="NCBI Taxonomy" id="350058"/>
    <lineage>
        <taxon>Bacteria</taxon>
        <taxon>Bacillati</taxon>
        <taxon>Actinomycetota</taxon>
        <taxon>Actinomycetes</taxon>
        <taxon>Mycobacteriales</taxon>
        <taxon>Mycobacteriaceae</taxon>
        <taxon>Mycolicibacterium</taxon>
    </lineage>
</organism>
<keyword id="KW-0028">Amino-acid biosynthesis</keyword>
<keyword id="KW-0963">Cytoplasm</keyword>
<keyword id="KW-0521">NADP</keyword>
<keyword id="KW-0560">Oxidoreductase</keyword>
<keyword id="KW-0641">Proline biosynthesis</keyword>
<proteinExistence type="inferred from homology"/>
<name>PROA_MYCVP</name>
<evidence type="ECO:0000255" key="1">
    <source>
        <dbReference type="HAMAP-Rule" id="MF_00412"/>
    </source>
</evidence>
<sequence>MSVQAPSVPDLRQQVHDAARRARGAARALASLSTETKNRALCTAADHVLMNTRTILDANTADLDAARAAGTPEAMLDRLALNPARVEGIADGLRQVAGLPDPIGEVIRGRTLPNGLQLRQQRVPLGVVGIVYEGRPNVTVDAFGLTLKSGNAVLLRGSSSAARSNAALVNALRAALATEGLDTDAVQLLPSEDRASVTHLIQARGLVDVVIPRGGAGLIDAVVRDAQVPTIETGVGNCHVFVHESADLDMAEEIVLNAKTRRPSVCNAAESLLIDAAIADVAVPRLTGALTAAGVTVHADPSEDELRAEFLSMDIALAIVDGVDGAISHINEYGTGHTEAIVTTDLAAAQRFSERVDAAAVMVNASTAFTDGEQFGFGAEIGISTQKLHARGPMGLPELTSTKWIVWGDGHTRPA</sequence>
<comment type="function">
    <text evidence="1">Catalyzes the NADPH-dependent reduction of L-glutamate 5-phosphate into L-glutamate 5-semialdehyde and phosphate. The product spontaneously undergoes cyclization to form 1-pyrroline-5-carboxylate.</text>
</comment>
<comment type="catalytic activity">
    <reaction evidence="1">
        <text>L-glutamate 5-semialdehyde + phosphate + NADP(+) = L-glutamyl 5-phosphate + NADPH + H(+)</text>
        <dbReference type="Rhea" id="RHEA:19541"/>
        <dbReference type="ChEBI" id="CHEBI:15378"/>
        <dbReference type="ChEBI" id="CHEBI:43474"/>
        <dbReference type="ChEBI" id="CHEBI:57783"/>
        <dbReference type="ChEBI" id="CHEBI:58066"/>
        <dbReference type="ChEBI" id="CHEBI:58274"/>
        <dbReference type="ChEBI" id="CHEBI:58349"/>
        <dbReference type="EC" id="1.2.1.41"/>
    </reaction>
</comment>
<comment type="pathway">
    <text evidence="1">Amino-acid biosynthesis; L-proline biosynthesis; L-glutamate 5-semialdehyde from L-glutamate: step 2/2.</text>
</comment>
<comment type="subcellular location">
    <subcellularLocation>
        <location evidence="1">Cytoplasm</location>
    </subcellularLocation>
</comment>
<comment type="similarity">
    <text evidence="1">Belongs to the gamma-glutamyl phosphate reductase family.</text>
</comment>